<organism>
    <name type="scientific">Thermosynechococcus vestitus (strain NIES-2133 / IAM M-273 / BP-1)</name>
    <dbReference type="NCBI Taxonomy" id="197221"/>
    <lineage>
        <taxon>Bacteria</taxon>
        <taxon>Bacillati</taxon>
        <taxon>Cyanobacteriota</taxon>
        <taxon>Cyanophyceae</taxon>
        <taxon>Acaryochloridales</taxon>
        <taxon>Thermosynechococcaceae</taxon>
        <taxon>Thermosynechococcus</taxon>
    </lineage>
</organism>
<evidence type="ECO:0000255" key="1">
    <source>
        <dbReference type="HAMAP-Rule" id="MF_01576"/>
    </source>
</evidence>
<evidence type="ECO:0000305" key="2"/>
<reference key="1">
    <citation type="journal article" date="2002" name="DNA Res.">
        <title>Complete genome structure of the thermophilic cyanobacterium Thermosynechococcus elongatus BP-1.</title>
        <authorList>
            <person name="Nakamura Y."/>
            <person name="Kaneko T."/>
            <person name="Sato S."/>
            <person name="Ikeuchi M."/>
            <person name="Katoh H."/>
            <person name="Sasamoto S."/>
            <person name="Watanabe A."/>
            <person name="Iriguchi M."/>
            <person name="Kawashima K."/>
            <person name="Kimura T."/>
            <person name="Kishida Y."/>
            <person name="Kiyokawa C."/>
            <person name="Kohara M."/>
            <person name="Matsumoto M."/>
            <person name="Matsuno A."/>
            <person name="Nakazaki N."/>
            <person name="Shimpo S."/>
            <person name="Sugimoto M."/>
            <person name="Takeuchi C."/>
            <person name="Yamada M."/>
            <person name="Tabata S."/>
        </authorList>
    </citation>
    <scope>NUCLEOTIDE SEQUENCE [LARGE SCALE GENOMIC DNA]</scope>
    <source>
        <strain>NIES-2133 / IAM M-273 / BP-1</strain>
    </source>
</reference>
<proteinExistence type="inferred from homology"/>
<dbReference type="EC" id="1.5.1.5" evidence="1"/>
<dbReference type="EC" id="3.5.4.9" evidence="1"/>
<dbReference type="EMBL" id="BA000039">
    <property type="protein sequence ID" value="BAC07574.1"/>
    <property type="status" value="ALT_INIT"/>
    <property type="molecule type" value="Genomic_DNA"/>
</dbReference>
<dbReference type="RefSeq" id="NP_680812.1">
    <property type="nucleotide sequence ID" value="NC_004113.1"/>
</dbReference>
<dbReference type="RefSeq" id="WP_164920629.1">
    <property type="nucleotide sequence ID" value="NC_004113.1"/>
</dbReference>
<dbReference type="SMR" id="Q8DMU0"/>
<dbReference type="STRING" id="197221.gene:10746599"/>
<dbReference type="EnsemblBacteria" id="BAC07574">
    <property type="protein sequence ID" value="BAC07574"/>
    <property type="gene ID" value="BAC07574"/>
</dbReference>
<dbReference type="KEGG" id="tel:tll0021"/>
<dbReference type="PATRIC" id="fig|197221.4.peg.20"/>
<dbReference type="eggNOG" id="COG0190">
    <property type="taxonomic scope" value="Bacteria"/>
</dbReference>
<dbReference type="UniPathway" id="UPA00193"/>
<dbReference type="Proteomes" id="UP000000440">
    <property type="component" value="Chromosome"/>
</dbReference>
<dbReference type="GO" id="GO:0005829">
    <property type="term" value="C:cytosol"/>
    <property type="evidence" value="ECO:0007669"/>
    <property type="project" value="TreeGrafter"/>
</dbReference>
<dbReference type="GO" id="GO:0004477">
    <property type="term" value="F:methenyltetrahydrofolate cyclohydrolase activity"/>
    <property type="evidence" value="ECO:0007669"/>
    <property type="project" value="UniProtKB-UniRule"/>
</dbReference>
<dbReference type="GO" id="GO:0004488">
    <property type="term" value="F:methylenetetrahydrofolate dehydrogenase (NADP+) activity"/>
    <property type="evidence" value="ECO:0007669"/>
    <property type="project" value="UniProtKB-UniRule"/>
</dbReference>
<dbReference type="GO" id="GO:0000105">
    <property type="term" value="P:L-histidine biosynthetic process"/>
    <property type="evidence" value="ECO:0007669"/>
    <property type="project" value="UniProtKB-KW"/>
</dbReference>
<dbReference type="GO" id="GO:0009086">
    <property type="term" value="P:methionine biosynthetic process"/>
    <property type="evidence" value="ECO:0007669"/>
    <property type="project" value="UniProtKB-KW"/>
</dbReference>
<dbReference type="GO" id="GO:0006164">
    <property type="term" value="P:purine nucleotide biosynthetic process"/>
    <property type="evidence" value="ECO:0007669"/>
    <property type="project" value="UniProtKB-KW"/>
</dbReference>
<dbReference type="GO" id="GO:0035999">
    <property type="term" value="P:tetrahydrofolate interconversion"/>
    <property type="evidence" value="ECO:0007669"/>
    <property type="project" value="UniProtKB-UniRule"/>
</dbReference>
<dbReference type="CDD" id="cd01080">
    <property type="entry name" value="NAD_bind_m-THF_DH_Cyclohyd"/>
    <property type="match status" value="1"/>
</dbReference>
<dbReference type="FunFam" id="3.40.50.720:FF:000006">
    <property type="entry name" value="Bifunctional protein FolD"/>
    <property type="match status" value="1"/>
</dbReference>
<dbReference type="FunFam" id="3.40.50.10860:FF:000005">
    <property type="entry name" value="C-1-tetrahydrofolate synthase, cytoplasmic, putative"/>
    <property type="match status" value="1"/>
</dbReference>
<dbReference type="Gene3D" id="3.40.50.10860">
    <property type="entry name" value="Leucine Dehydrogenase, chain A, domain 1"/>
    <property type="match status" value="1"/>
</dbReference>
<dbReference type="Gene3D" id="3.40.50.720">
    <property type="entry name" value="NAD(P)-binding Rossmann-like Domain"/>
    <property type="match status" value="1"/>
</dbReference>
<dbReference type="HAMAP" id="MF_01576">
    <property type="entry name" value="THF_DHG_CYH"/>
    <property type="match status" value="1"/>
</dbReference>
<dbReference type="InterPro" id="IPR046346">
    <property type="entry name" value="Aminoacid_DH-like_N_sf"/>
</dbReference>
<dbReference type="InterPro" id="IPR036291">
    <property type="entry name" value="NAD(P)-bd_dom_sf"/>
</dbReference>
<dbReference type="InterPro" id="IPR000672">
    <property type="entry name" value="THF_DH/CycHdrlase"/>
</dbReference>
<dbReference type="InterPro" id="IPR020630">
    <property type="entry name" value="THF_DH/CycHdrlase_cat_dom"/>
</dbReference>
<dbReference type="InterPro" id="IPR020867">
    <property type="entry name" value="THF_DH/CycHdrlase_CS"/>
</dbReference>
<dbReference type="InterPro" id="IPR020631">
    <property type="entry name" value="THF_DH/CycHdrlase_NAD-bd_dom"/>
</dbReference>
<dbReference type="NCBIfam" id="NF010783">
    <property type="entry name" value="PRK14186.1"/>
    <property type="match status" value="1"/>
</dbReference>
<dbReference type="PANTHER" id="PTHR48099:SF5">
    <property type="entry name" value="C-1-TETRAHYDROFOLATE SYNTHASE, CYTOPLASMIC"/>
    <property type="match status" value="1"/>
</dbReference>
<dbReference type="PANTHER" id="PTHR48099">
    <property type="entry name" value="C-1-TETRAHYDROFOLATE SYNTHASE, CYTOPLASMIC-RELATED"/>
    <property type="match status" value="1"/>
</dbReference>
<dbReference type="Pfam" id="PF00763">
    <property type="entry name" value="THF_DHG_CYH"/>
    <property type="match status" value="1"/>
</dbReference>
<dbReference type="Pfam" id="PF02882">
    <property type="entry name" value="THF_DHG_CYH_C"/>
    <property type="match status" value="1"/>
</dbReference>
<dbReference type="PRINTS" id="PR00085">
    <property type="entry name" value="THFDHDRGNASE"/>
</dbReference>
<dbReference type="SUPFAM" id="SSF53223">
    <property type="entry name" value="Aminoacid dehydrogenase-like, N-terminal domain"/>
    <property type="match status" value="1"/>
</dbReference>
<dbReference type="SUPFAM" id="SSF51735">
    <property type="entry name" value="NAD(P)-binding Rossmann-fold domains"/>
    <property type="match status" value="1"/>
</dbReference>
<dbReference type="PROSITE" id="PS00767">
    <property type="entry name" value="THF_DHG_CYH_2"/>
    <property type="match status" value="1"/>
</dbReference>
<keyword id="KW-0028">Amino-acid biosynthesis</keyword>
<keyword id="KW-0368">Histidine biosynthesis</keyword>
<keyword id="KW-0378">Hydrolase</keyword>
<keyword id="KW-0486">Methionine biosynthesis</keyword>
<keyword id="KW-0511">Multifunctional enzyme</keyword>
<keyword id="KW-0521">NADP</keyword>
<keyword id="KW-0554">One-carbon metabolism</keyword>
<keyword id="KW-0560">Oxidoreductase</keyword>
<keyword id="KW-0658">Purine biosynthesis</keyword>
<keyword id="KW-1185">Reference proteome</keyword>
<sequence>MVAHAATCLDGKSLAQSIERQLADHVRTFQAQWGRSPGLAVLRVGNDPASAVYVRAKEQACSRVGIQSFGAHLPATITEAALLAKITELNQDERVDGILLQLPLPPHLDPRPLLYAIHPDKDVDGLHPENLGRLVRDEPGLRSCTPAGVMQLLAAYGIDVVGRSAVVVGRSILVGKPLALMLLSANATVTIAHSRSRELASITRSAEILVTAMGQPRRITADMIRPGAVVIDVGINRIQRPDGKSSLWGDVDYEAARAVASYITPVPGGVGPMTVAMLLHNTVWSYCRRHNWQQPLLSLTSMPPAP</sequence>
<comment type="function">
    <text evidence="1">Catalyzes the oxidation of 5,10-methylenetetrahydrofolate to 5,10-methenyltetrahydrofolate and then the hydrolysis of 5,10-methenyltetrahydrofolate to 10-formyltetrahydrofolate.</text>
</comment>
<comment type="catalytic activity">
    <reaction evidence="1">
        <text>(6R)-5,10-methylene-5,6,7,8-tetrahydrofolate + NADP(+) = (6R)-5,10-methenyltetrahydrofolate + NADPH</text>
        <dbReference type="Rhea" id="RHEA:22812"/>
        <dbReference type="ChEBI" id="CHEBI:15636"/>
        <dbReference type="ChEBI" id="CHEBI:57455"/>
        <dbReference type="ChEBI" id="CHEBI:57783"/>
        <dbReference type="ChEBI" id="CHEBI:58349"/>
        <dbReference type="EC" id="1.5.1.5"/>
    </reaction>
</comment>
<comment type="catalytic activity">
    <reaction evidence="1">
        <text>(6R)-5,10-methenyltetrahydrofolate + H2O = (6R)-10-formyltetrahydrofolate + H(+)</text>
        <dbReference type="Rhea" id="RHEA:23700"/>
        <dbReference type="ChEBI" id="CHEBI:15377"/>
        <dbReference type="ChEBI" id="CHEBI:15378"/>
        <dbReference type="ChEBI" id="CHEBI:57455"/>
        <dbReference type="ChEBI" id="CHEBI:195366"/>
        <dbReference type="EC" id="3.5.4.9"/>
    </reaction>
</comment>
<comment type="pathway">
    <text evidence="1">One-carbon metabolism; tetrahydrofolate interconversion.</text>
</comment>
<comment type="subunit">
    <text evidence="1">Homodimer.</text>
</comment>
<comment type="similarity">
    <text evidence="1">Belongs to the tetrahydrofolate dehydrogenase/cyclohydrolase family.</text>
</comment>
<comment type="sequence caution" evidence="2">
    <conflict type="erroneous initiation">
        <sequence resource="EMBL-CDS" id="BAC07574"/>
    </conflict>
</comment>
<name>FOLD_THEVB</name>
<gene>
    <name evidence="1" type="primary">folD</name>
    <name type="ordered locus">tll0021</name>
</gene>
<feature type="chain" id="PRO_0000268529" description="Bifunctional protein FolD">
    <location>
        <begin position="1"/>
        <end position="306"/>
    </location>
</feature>
<feature type="binding site" evidence="1">
    <location>
        <begin position="169"/>
        <end position="171"/>
    </location>
    <ligand>
        <name>NADP(+)</name>
        <dbReference type="ChEBI" id="CHEBI:58349"/>
    </ligand>
</feature>
<feature type="binding site" evidence="1">
    <location>
        <position position="194"/>
    </location>
    <ligand>
        <name>NADP(+)</name>
        <dbReference type="ChEBI" id="CHEBI:58349"/>
    </ligand>
</feature>
<feature type="binding site" evidence="1">
    <location>
        <position position="235"/>
    </location>
    <ligand>
        <name>NADP(+)</name>
        <dbReference type="ChEBI" id="CHEBI:58349"/>
    </ligand>
</feature>
<protein>
    <recommendedName>
        <fullName evidence="1">Bifunctional protein FolD</fullName>
    </recommendedName>
    <domain>
        <recommendedName>
            <fullName evidence="1">Methylenetetrahydrofolate dehydrogenase</fullName>
            <ecNumber evidence="1">1.5.1.5</ecNumber>
        </recommendedName>
    </domain>
    <domain>
        <recommendedName>
            <fullName evidence="1">Methenyltetrahydrofolate cyclohydrolase</fullName>
            <ecNumber evidence="1">3.5.4.9</ecNumber>
        </recommendedName>
    </domain>
</protein>
<accession>Q8DMU0</accession>